<protein>
    <recommendedName>
        <fullName evidence="1">Peptide methionine sulfoxide reductase MsrB</fullName>
        <ecNumber evidence="1">1.8.4.12</ecNumber>
    </recommendedName>
    <alternativeName>
        <fullName evidence="1">Peptide-methionine (R)-S-oxide reductase</fullName>
    </alternativeName>
</protein>
<gene>
    <name evidence="1" type="primary">msrB</name>
    <name type="ordered locus">SynRCC307_0339</name>
</gene>
<dbReference type="EC" id="1.8.4.12" evidence="1"/>
<dbReference type="EMBL" id="CT978603">
    <property type="protein sequence ID" value="CAK27242.1"/>
    <property type="molecule type" value="Genomic_DNA"/>
</dbReference>
<dbReference type="SMR" id="A5GQT3"/>
<dbReference type="STRING" id="316278.SynRCC307_0339"/>
<dbReference type="KEGG" id="syr:SynRCC307_0339"/>
<dbReference type="eggNOG" id="COG0229">
    <property type="taxonomic scope" value="Bacteria"/>
</dbReference>
<dbReference type="HOGENOM" id="CLU_031040_8_5_3"/>
<dbReference type="OrthoDB" id="4174719at2"/>
<dbReference type="Proteomes" id="UP000001115">
    <property type="component" value="Chromosome"/>
</dbReference>
<dbReference type="GO" id="GO:0005737">
    <property type="term" value="C:cytoplasm"/>
    <property type="evidence" value="ECO:0007669"/>
    <property type="project" value="TreeGrafter"/>
</dbReference>
<dbReference type="GO" id="GO:0033743">
    <property type="term" value="F:peptide-methionine (R)-S-oxide reductase activity"/>
    <property type="evidence" value="ECO:0007669"/>
    <property type="project" value="UniProtKB-UniRule"/>
</dbReference>
<dbReference type="GO" id="GO:0008270">
    <property type="term" value="F:zinc ion binding"/>
    <property type="evidence" value="ECO:0007669"/>
    <property type="project" value="UniProtKB-UniRule"/>
</dbReference>
<dbReference type="GO" id="GO:0030091">
    <property type="term" value="P:protein repair"/>
    <property type="evidence" value="ECO:0007669"/>
    <property type="project" value="InterPro"/>
</dbReference>
<dbReference type="GO" id="GO:0006979">
    <property type="term" value="P:response to oxidative stress"/>
    <property type="evidence" value="ECO:0007669"/>
    <property type="project" value="InterPro"/>
</dbReference>
<dbReference type="FunFam" id="2.170.150.20:FF:000001">
    <property type="entry name" value="Peptide methionine sulfoxide reductase MsrB"/>
    <property type="match status" value="1"/>
</dbReference>
<dbReference type="Gene3D" id="2.170.150.20">
    <property type="entry name" value="Peptide methionine sulfoxide reductase"/>
    <property type="match status" value="1"/>
</dbReference>
<dbReference type="HAMAP" id="MF_01400">
    <property type="entry name" value="MsrB"/>
    <property type="match status" value="1"/>
</dbReference>
<dbReference type="InterPro" id="IPR028427">
    <property type="entry name" value="Met_Sox_Rdtase_MsrB"/>
</dbReference>
<dbReference type="InterPro" id="IPR002579">
    <property type="entry name" value="Met_Sox_Rdtase_MsrB_dom"/>
</dbReference>
<dbReference type="InterPro" id="IPR011057">
    <property type="entry name" value="Mss4-like_sf"/>
</dbReference>
<dbReference type="NCBIfam" id="TIGR00357">
    <property type="entry name" value="peptide-methionine (R)-S-oxide reductase MsrB"/>
    <property type="match status" value="1"/>
</dbReference>
<dbReference type="PANTHER" id="PTHR10173">
    <property type="entry name" value="METHIONINE SULFOXIDE REDUCTASE"/>
    <property type="match status" value="1"/>
</dbReference>
<dbReference type="PANTHER" id="PTHR10173:SF52">
    <property type="entry name" value="METHIONINE-R-SULFOXIDE REDUCTASE B1"/>
    <property type="match status" value="1"/>
</dbReference>
<dbReference type="Pfam" id="PF01641">
    <property type="entry name" value="SelR"/>
    <property type="match status" value="1"/>
</dbReference>
<dbReference type="SUPFAM" id="SSF51316">
    <property type="entry name" value="Mss4-like"/>
    <property type="match status" value="1"/>
</dbReference>
<dbReference type="PROSITE" id="PS51790">
    <property type="entry name" value="MSRB"/>
    <property type="match status" value="1"/>
</dbReference>
<reference key="1">
    <citation type="submission" date="2006-05" db="EMBL/GenBank/DDBJ databases">
        <authorList>
            <consortium name="Genoscope"/>
        </authorList>
    </citation>
    <scope>NUCLEOTIDE SEQUENCE [LARGE SCALE GENOMIC DNA]</scope>
    <source>
        <strain>RCC307</strain>
    </source>
</reference>
<organism>
    <name type="scientific">Synechococcus sp. (strain RCC307)</name>
    <dbReference type="NCBI Taxonomy" id="316278"/>
    <lineage>
        <taxon>Bacteria</taxon>
        <taxon>Bacillati</taxon>
        <taxon>Cyanobacteriota</taxon>
        <taxon>Cyanophyceae</taxon>
        <taxon>Synechococcales</taxon>
        <taxon>Synechococcaceae</taxon>
        <taxon>Synechococcus</taxon>
    </lineage>
</organism>
<comment type="catalytic activity">
    <reaction evidence="1">
        <text>L-methionyl-[protein] + [thioredoxin]-disulfide + H2O = L-methionyl-(R)-S-oxide-[protein] + [thioredoxin]-dithiol</text>
        <dbReference type="Rhea" id="RHEA:24164"/>
        <dbReference type="Rhea" id="RHEA-COMP:10698"/>
        <dbReference type="Rhea" id="RHEA-COMP:10700"/>
        <dbReference type="Rhea" id="RHEA-COMP:12313"/>
        <dbReference type="Rhea" id="RHEA-COMP:12314"/>
        <dbReference type="ChEBI" id="CHEBI:15377"/>
        <dbReference type="ChEBI" id="CHEBI:16044"/>
        <dbReference type="ChEBI" id="CHEBI:29950"/>
        <dbReference type="ChEBI" id="CHEBI:45764"/>
        <dbReference type="ChEBI" id="CHEBI:50058"/>
        <dbReference type="EC" id="1.8.4.12"/>
    </reaction>
</comment>
<comment type="cofactor">
    <cofactor evidence="1">
        <name>Zn(2+)</name>
        <dbReference type="ChEBI" id="CHEBI:29105"/>
    </cofactor>
    <text evidence="1">Binds 1 zinc ion per subunit. The zinc ion is important for the structural integrity of the protein.</text>
</comment>
<comment type="similarity">
    <text evidence="1">Belongs to the MsrB Met sulfoxide reductase family.</text>
</comment>
<sequence length="136" mass="15458">MDRTIDDPVEASENDWRSKLTPEQFRITREGGTERAFTGAYWNHKGDGMYRCICCGAELFRSDRKFDSGTGWPSFWEGVNPEAIRTIQDVSHGMVRTEIRCAKCDSHLGHVFQDSPTPTGLRYCVNSASLDFKDKT</sequence>
<feature type="chain" id="PRO_1000068299" description="Peptide methionine sulfoxide reductase MsrB">
    <location>
        <begin position="1"/>
        <end position="136"/>
    </location>
</feature>
<feature type="domain" description="MsrB" evidence="2">
    <location>
        <begin position="13"/>
        <end position="135"/>
    </location>
</feature>
<feature type="active site" description="Nucleophile" evidence="2">
    <location>
        <position position="124"/>
    </location>
</feature>
<feature type="binding site" evidence="2">
    <location>
        <position position="52"/>
    </location>
    <ligand>
        <name>Zn(2+)</name>
        <dbReference type="ChEBI" id="CHEBI:29105"/>
    </ligand>
</feature>
<feature type="binding site" evidence="2">
    <location>
        <position position="55"/>
    </location>
    <ligand>
        <name>Zn(2+)</name>
        <dbReference type="ChEBI" id="CHEBI:29105"/>
    </ligand>
</feature>
<feature type="binding site" evidence="2">
    <location>
        <position position="101"/>
    </location>
    <ligand>
        <name>Zn(2+)</name>
        <dbReference type="ChEBI" id="CHEBI:29105"/>
    </ligand>
</feature>
<feature type="binding site" evidence="2">
    <location>
        <position position="104"/>
    </location>
    <ligand>
        <name>Zn(2+)</name>
        <dbReference type="ChEBI" id="CHEBI:29105"/>
    </ligand>
</feature>
<proteinExistence type="inferred from homology"/>
<evidence type="ECO:0000255" key="1">
    <source>
        <dbReference type="HAMAP-Rule" id="MF_01400"/>
    </source>
</evidence>
<evidence type="ECO:0000255" key="2">
    <source>
        <dbReference type="PROSITE-ProRule" id="PRU01126"/>
    </source>
</evidence>
<accession>A5GQT3</accession>
<name>MSRB_SYNR3</name>
<keyword id="KW-0479">Metal-binding</keyword>
<keyword id="KW-0560">Oxidoreductase</keyword>
<keyword id="KW-1185">Reference proteome</keyword>
<keyword id="KW-0862">Zinc</keyword>